<reference key="1">
    <citation type="journal article" date="2002" name="DNA Res.">
        <title>Complete genome structure of the thermophilic cyanobacterium Thermosynechococcus elongatus BP-1.</title>
        <authorList>
            <person name="Nakamura Y."/>
            <person name="Kaneko T."/>
            <person name="Sato S."/>
            <person name="Ikeuchi M."/>
            <person name="Katoh H."/>
            <person name="Sasamoto S."/>
            <person name="Watanabe A."/>
            <person name="Iriguchi M."/>
            <person name="Kawashima K."/>
            <person name="Kimura T."/>
            <person name="Kishida Y."/>
            <person name="Kiyokawa C."/>
            <person name="Kohara M."/>
            <person name="Matsumoto M."/>
            <person name="Matsuno A."/>
            <person name="Nakazaki N."/>
            <person name="Shimpo S."/>
            <person name="Sugimoto M."/>
            <person name="Takeuchi C."/>
            <person name="Yamada M."/>
            <person name="Tabata S."/>
        </authorList>
    </citation>
    <scope>NUCLEOTIDE SEQUENCE [LARGE SCALE GENOMIC DNA]</scope>
    <source>
        <strain>NIES-2133 / IAM M-273 / BP-1</strain>
    </source>
</reference>
<accession>Q8DI59</accession>
<organism>
    <name type="scientific">Thermosynechococcus vestitus (strain NIES-2133 / IAM M-273 / BP-1)</name>
    <dbReference type="NCBI Taxonomy" id="197221"/>
    <lineage>
        <taxon>Bacteria</taxon>
        <taxon>Bacillati</taxon>
        <taxon>Cyanobacteriota</taxon>
        <taxon>Cyanophyceae</taxon>
        <taxon>Acaryochloridales</taxon>
        <taxon>Thermosynechococcaceae</taxon>
        <taxon>Thermosynechococcus</taxon>
    </lineage>
</organism>
<protein>
    <recommendedName>
        <fullName evidence="1">7-cyano-7-deazaguanine synthase</fullName>
        <ecNumber evidence="1">6.3.4.20</ecNumber>
    </recommendedName>
    <alternativeName>
        <fullName evidence="1">7-cyano-7-carbaguanine synthase</fullName>
    </alternativeName>
    <alternativeName>
        <fullName evidence="1">PreQ(0) synthase</fullName>
    </alternativeName>
    <alternativeName>
        <fullName evidence="1">Queuosine biosynthesis protein QueC</fullName>
    </alternativeName>
</protein>
<keyword id="KW-0067">ATP-binding</keyword>
<keyword id="KW-0436">Ligase</keyword>
<keyword id="KW-0479">Metal-binding</keyword>
<keyword id="KW-0547">Nucleotide-binding</keyword>
<keyword id="KW-0671">Queuosine biosynthesis</keyword>
<keyword id="KW-1185">Reference proteome</keyword>
<keyword id="KW-0862">Zinc</keyword>
<dbReference type="EC" id="6.3.4.20" evidence="1"/>
<dbReference type="EMBL" id="BA000039">
    <property type="protein sequence ID" value="BAC09284.1"/>
    <property type="molecule type" value="Genomic_DNA"/>
</dbReference>
<dbReference type="RefSeq" id="NP_682522.1">
    <property type="nucleotide sequence ID" value="NC_004113.1"/>
</dbReference>
<dbReference type="RefSeq" id="WP_011057569.1">
    <property type="nucleotide sequence ID" value="NC_004113.1"/>
</dbReference>
<dbReference type="SMR" id="Q8DI59"/>
<dbReference type="STRING" id="197221.gene:10748336"/>
<dbReference type="EnsemblBacteria" id="BAC09284">
    <property type="protein sequence ID" value="BAC09284"/>
    <property type="gene ID" value="BAC09284"/>
</dbReference>
<dbReference type="KEGG" id="tel:tlr1732"/>
<dbReference type="PATRIC" id="fig|197221.4.peg.1813"/>
<dbReference type="eggNOG" id="COG0603">
    <property type="taxonomic scope" value="Bacteria"/>
</dbReference>
<dbReference type="UniPathway" id="UPA00391"/>
<dbReference type="Proteomes" id="UP000000440">
    <property type="component" value="Chromosome"/>
</dbReference>
<dbReference type="GO" id="GO:0005524">
    <property type="term" value="F:ATP binding"/>
    <property type="evidence" value="ECO:0007669"/>
    <property type="project" value="UniProtKB-UniRule"/>
</dbReference>
<dbReference type="GO" id="GO:0016879">
    <property type="term" value="F:ligase activity, forming carbon-nitrogen bonds"/>
    <property type="evidence" value="ECO:0007669"/>
    <property type="project" value="UniProtKB-UniRule"/>
</dbReference>
<dbReference type="GO" id="GO:0008270">
    <property type="term" value="F:zinc ion binding"/>
    <property type="evidence" value="ECO:0007669"/>
    <property type="project" value="UniProtKB-UniRule"/>
</dbReference>
<dbReference type="GO" id="GO:0008616">
    <property type="term" value="P:queuosine biosynthetic process"/>
    <property type="evidence" value="ECO:0007669"/>
    <property type="project" value="UniProtKB-UniRule"/>
</dbReference>
<dbReference type="CDD" id="cd01995">
    <property type="entry name" value="QueC-like"/>
    <property type="match status" value="1"/>
</dbReference>
<dbReference type="Gene3D" id="3.40.50.620">
    <property type="entry name" value="HUPs"/>
    <property type="match status" value="1"/>
</dbReference>
<dbReference type="HAMAP" id="MF_01633">
    <property type="entry name" value="QueC"/>
    <property type="match status" value="1"/>
</dbReference>
<dbReference type="InterPro" id="IPR018317">
    <property type="entry name" value="QueC"/>
</dbReference>
<dbReference type="InterPro" id="IPR014729">
    <property type="entry name" value="Rossmann-like_a/b/a_fold"/>
</dbReference>
<dbReference type="NCBIfam" id="TIGR00364">
    <property type="entry name" value="7-cyano-7-deazaguanine synthase QueC"/>
    <property type="match status" value="1"/>
</dbReference>
<dbReference type="PANTHER" id="PTHR42914">
    <property type="entry name" value="7-CYANO-7-DEAZAGUANINE SYNTHASE"/>
    <property type="match status" value="1"/>
</dbReference>
<dbReference type="PANTHER" id="PTHR42914:SF1">
    <property type="entry name" value="7-CYANO-7-DEAZAGUANINE SYNTHASE"/>
    <property type="match status" value="1"/>
</dbReference>
<dbReference type="Pfam" id="PF06508">
    <property type="entry name" value="QueC"/>
    <property type="match status" value="1"/>
</dbReference>
<dbReference type="PIRSF" id="PIRSF006293">
    <property type="entry name" value="ExsB"/>
    <property type="match status" value="1"/>
</dbReference>
<dbReference type="SUPFAM" id="SSF52402">
    <property type="entry name" value="Adenine nucleotide alpha hydrolases-like"/>
    <property type="match status" value="1"/>
</dbReference>
<sequence>MVTTQKAVVLLSGGLDSSTVLFRAKALGYACYALSFDYGQRHRRELEAAIAIATSAGVVEHQILPLNLRLWGGSALTDLSIDLPRDRDLATMSQEIPVTYVPARNTIFLSVALAYAEALEARSVHIGVNALDYSGYPDCRPDYIAAMQEVYRLGTKQGREGQPIEIVTPLIDLHKTDIIRLGHGYGVPWEKTWSCYSDGQQACGRCDACRLRLAAFAELGLVDPLPYAVHPPL</sequence>
<gene>
    <name evidence="1" type="primary">queC</name>
    <name type="ordered locus">tlr1732</name>
</gene>
<evidence type="ECO:0000255" key="1">
    <source>
        <dbReference type="HAMAP-Rule" id="MF_01633"/>
    </source>
</evidence>
<name>QUEC_THEVB</name>
<feature type="chain" id="PRO_0000246944" description="7-cyano-7-deazaguanine synthase">
    <location>
        <begin position="1"/>
        <end position="233"/>
    </location>
</feature>
<feature type="binding site" evidence="1">
    <location>
        <begin position="11"/>
        <end position="21"/>
    </location>
    <ligand>
        <name>ATP</name>
        <dbReference type="ChEBI" id="CHEBI:30616"/>
    </ligand>
</feature>
<feature type="binding site" evidence="1">
    <location>
        <position position="195"/>
    </location>
    <ligand>
        <name>Zn(2+)</name>
        <dbReference type="ChEBI" id="CHEBI:29105"/>
    </ligand>
</feature>
<feature type="binding site" evidence="1">
    <location>
        <position position="203"/>
    </location>
    <ligand>
        <name>Zn(2+)</name>
        <dbReference type="ChEBI" id="CHEBI:29105"/>
    </ligand>
</feature>
<feature type="binding site" evidence="1">
    <location>
        <position position="206"/>
    </location>
    <ligand>
        <name>Zn(2+)</name>
        <dbReference type="ChEBI" id="CHEBI:29105"/>
    </ligand>
</feature>
<feature type="binding site" evidence="1">
    <location>
        <position position="209"/>
    </location>
    <ligand>
        <name>Zn(2+)</name>
        <dbReference type="ChEBI" id="CHEBI:29105"/>
    </ligand>
</feature>
<comment type="function">
    <text evidence="1">Catalyzes the ATP-dependent conversion of 7-carboxy-7-deazaguanine (CDG) to 7-cyano-7-deazaguanine (preQ(0)).</text>
</comment>
<comment type="catalytic activity">
    <reaction evidence="1">
        <text>7-carboxy-7-deazaguanine + NH4(+) + ATP = 7-cyano-7-deazaguanine + ADP + phosphate + H2O + H(+)</text>
        <dbReference type="Rhea" id="RHEA:27982"/>
        <dbReference type="ChEBI" id="CHEBI:15377"/>
        <dbReference type="ChEBI" id="CHEBI:15378"/>
        <dbReference type="ChEBI" id="CHEBI:28938"/>
        <dbReference type="ChEBI" id="CHEBI:30616"/>
        <dbReference type="ChEBI" id="CHEBI:43474"/>
        <dbReference type="ChEBI" id="CHEBI:45075"/>
        <dbReference type="ChEBI" id="CHEBI:61036"/>
        <dbReference type="ChEBI" id="CHEBI:456216"/>
        <dbReference type="EC" id="6.3.4.20"/>
    </reaction>
</comment>
<comment type="cofactor">
    <cofactor evidence="1">
        <name>Zn(2+)</name>
        <dbReference type="ChEBI" id="CHEBI:29105"/>
    </cofactor>
    <text evidence="1">Binds 1 zinc ion per subunit.</text>
</comment>
<comment type="pathway">
    <text evidence="1">Purine metabolism; 7-cyano-7-deazaguanine biosynthesis.</text>
</comment>
<comment type="similarity">
    <text evidence="1">Belongs to the QueC family.</text>
</comment>
<proteinExistence type="inferred from homology"/>